<name>SYK_UREU1</name>
<sequence length="493" mass="57163">MERKFSDQELIRRNHLQELKDQNKNPFLATKVERSMSLKDFAEEYKNFSKEELHNMDLKKVTLAGRLIGVRQTFGIIQDFSTKLQIYIDKKNVDPEVFSTFKSLDIGDIVELQGVAMKTNSDEITLNVTNIKLVAKSLKVLPEKYHGLVDEEIKARQRYLDLIVNDESKNTFIKRSLIIREMRNWLDSQGFFEVETPVLQDILSGAAARPFITHHNTLDKQYYLRIATEIALKKCIVGGFEKVYEIGRIFRNEGMDSTHNPEFTSVELYVAYVDLWYIMQLTEDLIRHIATKLKLLNPTFRGFSVDLNKPFKKAHMVDLINEHVGVNFFEVKSDEQALELAKKHHVKLLDHQKNFGHIVNAFFETFVEEKLIEPTFVYGHPVQVSPLTKKNQEDPRFVDRFELFICQKEFANAYSEINDPIDQYERFVAQLEEAKLGNDEANELDMEFIEALEYGMPPTGGLGIGVDRLVMLLTSNDSIRNVLLFPHMKDKAK</sequence>
<evidence type="ECO:0000255" key="1">
    <source>
        <dbReference type="HAMAP-Rule" id="MF_00252"/>
    </source>
</evidence>
<organism>
    <name type="scientific">Ureaplasma urealyticum serovar 10 (strain ATCC 33699 / Western)</name>
    <dbReference type="NCBI Taxonomy" id="565575"/>
    <lineage>
        <taxon>Bacteria</taxon>
        <taxon>Bacillati</taxon>
        <taxon>Mycoplasmatota</taxon>
        <taxon>Mycoplasmoidales</taxon>
        <taxon>Mycoplasmoidaceae</taxon>
        <taxon>Ureaplasma</taxon>
    </lineage>
</organism>
<keyword id="KW-0030">Aminoacyl-tRNA synthetase</keyword>
<keyword id="KW-0067">ATP-binding</keyword>
<keyword id="KW-0963">Cytoplasm</keyword>
<keyword id="KW-0436">Ligase</keyword>
<keyword id="KW-0460">Magnesium</keyword>
<keyword id="KW-0479">Metal-binding</keyword>
<keyword id="KW-0547">Nucleotide-binding</keyword>
<keyword id="KW-0648">Protein biosynthesis</keyword>
<dbReference type="EC" id="6.1.1.6" evidence="1"/>
<dbReference type="EMBL" id="CP001184">
    <property type="protein sequence ID" value="ACI60069.1"/>
    <property type="molecule type" value="Genomic_DNA"/>
</dbReference>
<dbReference type="RefSeq" id="WP_004025894.1">
    <property type="nucleotide sequence ID" value="NC_011374.1"/>
</dbReference>
<dbReference type="SMR" id="B5ZAP2"/>
<dbReference type="STRING" id="565575.UUR10_0069"/>
<dbReference type="GeneID" id="93848556"/>
<dbReference type="KEGG" id="uue:UUR10_0069"/>
<dbReference type="eggNOG" id="COG1190">
    <property type="taxonomic scope" value="Bacteria"/>
</dbReference>
<dbReference type="HOGENOM" id="CLU_008255_6_0_14"/>
<dbReference type="OrthoDB" id="9801152at2"/>
<dbReference type="Proteomes" id="UP000002018">
    <property type="component" value="Chromosome"/>
</dbReference>
<dbReference type="GO" id="GO:0005829">
    <property type="term" value="C:cytosol"/>
    <property type="evidence" value="ECO:0007669"/>
    <property type="project" value="TreeGrafter"/>
</dbReference>
<dbReference type="GO" id="GO:0005524">
    <property type="term" value="F:ATP binding"/>
    <property type="evidence" value="ECO:0007669"/>
    <property type="project" value="UniProtKB-UniRule"/>
</dbReference>
<dbReference type="GO" id="GO:0004824">
    <property type="term" value="F:lysine-tRNA ligase activity"/>
    <property type="evidence" value="ECO:0007669"/>
    <property type="project" value="UniProtKB-UniRule"/>
</dbReference>
<dbReference type="GO" id="GO:0000287">
    <property type="term" value="F:magnesium ion binding"/>
    <property type="evidence" value="ECO:0007669"/>
    <property type="project" value="UniProtKB-UniRule"/>
</dbReference>
<dbReference type="GO" id="GO:0000049">
    <property type="term" value="F:tRNA binding"/>
    <property type="evidence" value="ECO:0007669"/>
    <property type="project" value="TreeGrafter"/>
</dbReference>
<dbReference type="GO" id="GO:0006430">
    <property type="term" value="P:lysyl-tRNA aminoacylation"/>
    <property type="evidence" value="ECO:0007669"/>
    <property type="project" value="UniProtKB-UniRule"/>
</dbReference>
<dbReference type="CDD" id="cd00775">
    <property type="entry name" value="LysRS_core"/>
    <property type="match status" value="1"/>
</dbReference>
<dbReference type="CDD" id="cd04322">
    <property type="entry name" value="LysRS_N"/>
    <property type="match status" value="1"/>
</dbReference>
<dbReference type="Gene3D" id="3.30.930.10">
    <property type="entry name" value="Bira Bifunctional Protein, Domain 2"/>
    <property type="match status" value="1"/>
</dbReference>
<dbReference type="Gene3D" id="2.40.50.140">
    <property type="entry name" value="Nucleic acid-binding proteins"/>
    <property type="match status" value="1"/>
</dbReference>
<dbReference type="HAMAP" id="MF_00252">
    <property type="entry name" value="Lys_tRNA_synth_class2"/>
    <property type="match status" value="1"/>
</dbReference>
<dbReference type="InterPro" id="IPR004364">
    <property type="entry name" value="Aa-tRNA-synt_II"/>
</dbReference>
<dbReference type="InterPro" id="IPR006195">
    <property type="entry name" value="aa-tRNA-synth_II"/>
</dbReference>
<dbReference type="InterPro" id="IPR045864">
    <property type="entry name" value="aa-tRNA-synth_II/BPL/LPL"/>
</dbReference>
<dbReference type="InterPro" id="IPR002313">
    <property type="entry name" value="Lys-tRNA-ligase_II"/>
</dbReference>
<dbReference type="InterPro" id="IPR044136">
    <property type="entry name" value="Lys-tRNA-ligase_II_N"/>
</dbReference>
<dbReference type="InterPro" id="IPR018149">
    <property type="entry name" value="Lys-tRNA-synth_II_C"/>
</dbReference>
<dbReference type="InterPro" id="IPR012340">
    <property type="entry name" value="NA-bd_OB-fold"/>
</dbReference>
<dbReference type="InterPro" id="IPR004365">
    <property type="entry name" value="NA-bd_OB_tRNA"/>
</dbReference>
<dbReference type="NCBIfam" id="TIGR00499">
    <property type="entry name" value="lysS_bact"/>
    <property type="match status" value="1"/>
</dbReference>
<dbReference type="NCBIfam" id="NF001756">
    <property type="entry name" value="PRK00484.1"/>
    <property type="match status" value="1"/>
</dbReference>
<dbReference type="PANTHER" id="PTHR42918:SF15">
    <property type="entry name" value="LYSINE--TRNA LIGASE, CHLOROPLASTIC_MITOCHONDRIAL"/>
    <property type="match status" value="1"/>
</dbReference>
<dbReference type="PANTHER" id="PTHR42918">
    <property type="entry name" value="LYSYL-TRNA SYNTHETASE"/>
    <property type="match status" value="1"/>
</dbReference>
<dbReference type="Pfam" id="PF00152">
    <property type="entry name" value="tRNA-synt_2"/>
    <property type="match status" value="1"/>
</dbReference>
<dbReference type="Pfam" id="PF01336">
    <property type="entry name" value="tRNA_anti-codon"/>
    <property type="match status" value="1"/>
</dbReference>
<dbReference type="PRINTS" id="PR00982">
    <property type="entry name" value="TRNASYNTHLYS"/>
</dbReference>
<dbReference type="SUPFAM" id="SSF55681">
    <property type="entry name" value="Class II aaRS and biotin synthetases"/>
    <property type="match status" value="1"/>
</dbReference>
<dbReference type="SUPFAM" id="SSF50249">
    <property type="entry name" value="Nucleic acid-binding proteins"/>
    <property type="match status" value="1"/>
</dbReference>
<dbReference type="PROSITE" id="PS50862">
    <property type="entry name" value="AA_TRNA_LIGASE_II"/>
    <property type="match status" value="1"/>
</dbReference>
<comment type="catalytic activity">
    <reaction evidence="1">
        <text>tRNA(Lys) + L-lysine + ATP = L-lysyl-tRNA(Lys) + AMP + diphosphate</text>
        <dbReference type="Rhea" id="RHEA:20792"/>
        <dbReference type="Rhea" id="RHEA-COMP:9696"/>
        <dbReference type="Rhea" id="RHEA-COMP:9697"/>
        <dbReference type="ChEBI" id="CHEBI:30616"/>
        <dbReference type="ChEBI" id="CHEBI:32551"/>
        <dbReference type="ChEBI" id="CHEBI:33019"/>
        <dbReference type="ChEBI" id="CHEBI:78442"/>
        <dbReference type="ChEBI" id="CHEBI:78529"/>
        <dbReference type="ChEBI" id="CHEBI:456215"/>
        <dbReference type="EC" id="6.1.1.6"/>
    </reaction>
</comment>
<comment type="cofactor">
    <cofactor evidence="1">
        <name>Mg(2+)</name>
        <dbReference type="ChEBI" id="CHEBI:18420"/>
    </cofactor>
    <text evidence="1">Binds 3 Mg(2+) ions per subunit.</text>
</comment>
<comment type="subunit">
    <text evidence="1">Homodimer.</text>
</comment>
<comment type="subcellular location">
    <subcellularLocation>
        <location evidence="1">Cytoplasm</location>
    </subcellularLocation>
</comment>
<comment type="similarity">
    <text evidence="1">Belongs to the class-II aminoacyl-tRNA synthetase family.</text>
</comment>
<reference key="1">
    <citation type="submission" date="2008-10" db="EMBL/GenBank/DDBJ databases">
        <title>Genome sequence of Ureaplasma urealyticum serovar 10 ATCC-33699.</title>
        <authorList>
            <person name="Shrivastava S."/>
            <person name="Methe B.A."/>
            <person name="Glass J."/>
            <person name="White K."/>
            <person name="Duffy L.B."/>
        </authorList>
    </citation>
    <scope>NUCLEOTIDE SEQUENCE [LARGE SCALE GENOMIC DNA]</scope>
    <source>
        <strain>ATCC 33699 / Western</strain>
    </source>
</reference>
<protein>
    <recommendedName>
        <fullName evidence="1">Lysine--tRNA ligase</fullName>
        <ecNumber evidence="1">6.1.1.6</ecNumber>
    </recommendedName>
    <alternativeName>
        <fullName evidence="1">Lysyl-tRNA synthetase</fullName>
        <shortName evidence="1">LysRS</shortName>
    </alternativeName>
</protein>
<proteinExistence type="inferred from homology"/>
<gene>
    <name evidence="1" type="primary">lysS</name>
    <name type="ordered locus">UUR10_0069</name>
</gene>
<accession>B5ZAP2</accession>
<feature type="chain" id="PRO_1000101157" description="Lysine--tRNA ligase">
    <location>
        <begin position="1"/>
        <end position="493"/>
    </location>
</feature>
<feature type="binding site" evidence="1">
    <location>
        <position position="402"/>
    </location>
    <ligand>
        <name>Mg(2+)</name>
        <dbReference type="ChEBI" id="CHEBI:18420"/>
        <label>1</label>
    </ligand>
</feature>
<feature type="binding site" evidence="1">
    <location>
        <position position="409"/>
    </location>
    <ligand>
        <name>Mg(2+)</name>
        <dbReference type="ChEBI" id="CHEBI:18420"/>
        <label>1</label>
    </ligand>
</feature>
<feature type="binding site" evidence="1">
    <location>
        <position position="409"/>
    </location>
    <ligand>
        <name>Mg(2+)</name>
        <dbReference type="ChEBI" id="CHEBI:18420"/>
        <label>2</label>
    </ligand>
</feature>